<protein>
    <recommendedName>
        <fullName evidence="1">LL-diaminopimelate aminotransferase</fullName>
        <shortName evidence="1">DAP-AT</shortName>
        <shortName evidence="1">DAP-aminotransferase</shortName>
        <shortName evidence="1">LL-DAP-aminotransferase</shortName>
        <ecNumber evidence="1">2.6.1.83</ecNumber>
    </recommendedName>
</protein>
<feature type="chain" id="PRO_0000342251" description="LL-diaminopimelate aminotransferase">
    <location>
        <begin position="1"/>
        <end position="386"/>
    </location>
</feature>
<feature type="binding site" evidence="1">
    <location>
        <position position="13"/>
    </location>
    <ligand>
        <name>substrate</name>
    </ligand>
</feature>
<feature type="binding site" evidence="1">
    <location>
        <position position="38"/>
    </location>
    <ligand>
        <name>substrate</name>
    </ligand>
</feature>
<feature type="binding site" evidence="1">
    <location>
        <position position="67"/>
    </location>
    <ligand>
        <name>pyridoxal 5'-phosphate</name>
        <dbReference type="ChEBI" id="CHEBI:597326"/>
    </ligand>
</feature>
<feature type="binding site" evidence="1">
    <location>
        <begin position="101"/>
        <end position="102"/>
    </location>
    <ligand>
        <name>pyridoxal 5'-phosphate</name>
        <dbReference type="ChEBI" id="CHEBI:597326"/>
    </ligand>
</feature>
<feature type="binding site" evidence="1">
    <location>
        <position position="102"/>
    </location>
    <ligand>
        <name>substrate</name>
    </ligand>
</feature>
<feature type="binding site" evidence="1">
    <location>
        <position position="126"/>
    </location>
    <ligand>
        <name>pyridoxal 5'-phosphate</name>
        <dbReference type="ChEBI" id="CHEBI:597326"/>
    </ligand>
</feature>
<feature type="binding site" evidence="1">
    <location>
        <position position="126"/>
    </location>
    <ligand>
        <name>substrate</name>
    </ligand>
</feature>
<feature type="binding site" evidence="1">
    <location>
        <position position="176"/>
    </location>
    <ligand>
        <name>pyridoxal 5'-phosphate</name>
        <dbReference type="ChEBI" id="CHEBI:597326"/>
    </ligand>
</feature>
<feature type="binding site" evidence="1">
    <location>
        <position position="176"/>
    </location>
    <ligand>
        <name>substrate</name>
    </ligand>
</feature>
<feature type="binding site" evidence="1">
    <location>
        <position position="207"/>
    </location>
    <ligand>
        <name>pyridoxal 5'-phosphate</name>
        <dbReference type="ChEBI" id="CHEBI:597326"/>
    </ligand>
</feature>
<feature type="binding site" evidence="1">
    <location>
        <begin position="235"/>
        <end position="237"/>
    </location>
    <ligand>
        <name>pyridoxal 5'-phosphate</name>
        <dbReference type="ChEBI" id="CHEBI:597326"/>
    </ligand>
</feature>
<feature type="binding site" evidence="1">
    <location>
        <position position="246"/>
    </location>
    <ligand>
        <name>pyridoxal 5'-phosphate</name>
        <dbReference type="ChEBI" id="CHEBI:597326"/>
    </ligand>
</feature>
<feature type="binding site" evidence="1">
    <location>
        <position position="364"/>
    </location>
    <ligand>
        <name>substrate</name>
    </ligand>
</feature>
<feature type="modified residue" description="N6-(pyridoxal phosphate)lysine" evidence="1">
    <location>
        <position position="238"/>
    </location>
</feature>
<gene>
    <name evidence="1" type="primary">dapL</name>
    <name type="ordered locus">Nther_1272</name>
</gene>
<name>DAPAT_NATTJ</name>
<accession>B2A250</accession>
<keyword id="KW-0032">Aminotransferase</keyword>
<keyword id="KW-0663">Pyridoxal phosphate</keyword>
<keyword id="KW-1185">Reference proteome</keyword>
<keyword id="KW-0808">Transferase</keyword>
<proteinExistence type="inferred from homology"/>
<organism>
    <name type="scientific">Natranaerobius thermophilus (strain ATCC BAA-1301 / DSM 18059 / JW/NM-WN-LF)</name>
    <dbReference type="NCBI Taxonomy" id="457570"/>
    <lineage>
        <taxon>Bacteria</taxon>
        <taxon>Bacillati</taxon>
        <taxon>Bacillota</taxon>
        <taxon>Clostridia</taxon>
        <taxon>Natranaerobiales</taxon>
        <taxon>Natranaerobiaceae</taxon>
        <taxon>Natranaerobius</taxon>
    </lineage>
</organism>
<comment type="function">
    <text evidence="1">Involved in the synthesis of meso-diaminopimelate (m-DAP or DL-DAP), required for both lysine and peptidoglycan biosynthesis. Catalyzes the direct conversion of tetrahydrodipicolinate to LL-diaminopimelate.</text>
</comment>
<comment type="catalytic activity">
    <reaction evidence="1">
        <text>(2S,6S)-2,6-diaminopimelate + 2-oxoglutarate = (S)-2,3,4,5-tetrahydrodipicolinate + L-glutamate + H2O + H(+)</text>
        <dbReference type="Rhea" id="RHEA:23988"/>
        <dbReference type="ChEBI" id="CHEBI:15377"/>
        <dbReference type="ChEBI" id="CHEBI:15378"/>
        <dbReference type="ChEBI" id="CHEBI:16810"/>
        <dbReference type="ChEBI" id="CHEBI:16845"/>
        <dbReference type="ChEBI" id="CHEBI:29985"/>
        <dbReference type="ChEBI" id="CHEBI:57609"/>
        <dbReference type="EC" id="2.6.1.83"/>
    </reaction>
</comment>
<comment type="cofactor">
    <cofactor evidence="1">
        <name>pyridoxal 5'-phosphate</name>
        <dbReference type="ChEBI" id="CHEBI:597326"/>
    </cofactor>
</comment>
<comment type="pathway">
    <text evidence="1">Amino-acid biosynthesis; L-lysine biosynthesis via DAP pathway; LL-2,6-diaminopimelate from (S)-tetrahydrodipicolinate (aminotransferase route): step 1/1.</text>
</comment>
<comment type="subunit">
    <text evidence="1">Homodimer.</text>
</comment>
<comment type="similarity">
    <text evidence="1">Belongs to the class-I pyridoxal-phosphate-dependent aminotransferase family. LL-diaminopimelate aminotransferase subfamily.</text>
</comment>
<dbReference type="EC" id="2.6.1.83" evidence="1"/>
<dbReference type="EMBL" id="CP001034">
    <property type="protein sequence ID" value="ACB84855.1"/>
    <property type="molecule type" value="Genomic_DNA"/>
</dbReference>
<dbReference type="RefSeq" id="WP_012447730.1">
    <property type="nucleotide sequence ID" value="NC_010718.1"/>
</dbReference>
<dbReference type="SMR" id="B2A250"/>
<dbReference type="FunCoup" id="B2A250">
    <property type="interactions" value="88"/>
</dbReference>
<dbReference type="STRING" id="457570.Nther_1272"/>
<dbReference type="KEGG" id="nth:Nther_1272"/>
<dbReference type="eggNOG" id="COG0436">
    <property type="taxonomic scope" value="Bacteria"/>
</dbReference>
<dbReference type="HOGENOM" id="CLU_017584_4_5_9"/>
<dbReference type="InParanoid" id="B2A250"/>
<dbReference type="OrthoDB" id="9803354at2"/>
<dbReference type="UniPathway" id="UPA00034">
    <property type="reaction ID" value="UER00466"/>
</dbReference>
<dbReference type="Proteomes" id="UP000001683">
    <property type="component" value="Chromosome"/>
</dbReference>
<dbReference type="GO" id="GO:0010285">
    <property type="term" value="F:L,L-diaminopimelate aminotransferase activity"/>
    <property type="evidence" value="ECO:0007669"/>
    <property type="project" value="UniProtKB-UniRule"/>
</dbReference>
<dbReference type="GO" id="GO:0030170">
    <property type="term" value="F:pyridoxal phosphate binding"/>
    <property type="evidence" value="ECO:0007669"/>
    <property type="project" value="UniProtKB-UniRule"/>
</dbReference>
<dbReference type="GO" id="GO:0033362">
    <property type="term" value="P:lysine biosynthetic process via diaminopimelate, diaminopimelate-aminotransferase pathway"/>
    <property type="evidence" value="ECO:0007669"/>
    <property type="project" value="UniProtKB-UniRule"/>
</dbReference>
<dbReference type="CDD" id="cd00609">
    <property type="entry name" value="AAT_like"/>
    <property type="match status" value="1"/>
</dbReference>
<dbReference type="Gene3D" id="3.90.1150.10">
    <property type="entry name" value="Aspartate Aminotransferase, domain 1"/>
    <property type="match status" value="1"/>
</dbReference>
<dbReference type="Gene3D" id="3.40.640.10">
    <property type="entry name" value="Type I PLP-dependent aspartate aminotransferase-like (Major domain)"/>
    <property type="match status" value="1"/>
</dbReference>
<dbReference type="HAMAP" id="MF_01642">
    <property type="entry name" value="DapL_aminotrans_1"/>
    <property type="match status" value="1"/>
</dbReference>
<dbReference type="InterPro" id="IPR004839">
    <property type="entry name" value="Aminotransferase_I/II_large"/>
</dbReference>
<dbReference type="InterPro" id="IPR019942">
    <property type="entry name" value="DapL/ALD1"/>
</dbReference>
<dbReference type="InterPro" id="IPR050881">
    <property type="entry name" value="LL-DAP_aminotransferase"/>
</dbReference>
<dbReference type="InterPro" id="IPR004838">
    <property type="entry name" value="NHTrfase_class1_PyrdxlP-BS"/>
</dbReference>
<dbReference type="InterPro" id="IPR015424">
    <property type="entry name" value="PyrdxlP-dep_Trfase"/>
</dbReference>
<dbReference type="InterPro" id="IPR015421">
    <property type="entry name" value="PyrdxlP-dep_Trfase_major"/>
</dbReference>
<dbReference type="InterPro" id="IPR015422">
    <property type="entry name" value="PyrdxlP-dep_Trfase_small"/>
</dbReference>
<dbReference type="NCBIfam" id="NF006756">
    <property type="entry name" value="PRK09276.1"/>
    <property type="match status" value="1"/>
</dbReference>
<dbReference type="PANTHER" id="PTHR42832">
    <property type="entry name" value="AMINO ACID AMINOTRANSFERASE"/>
    <property type="match status" value="1"/>
</dbReference>
<dbReference type="PANTHER" id="PTHR42832:SF3">
    <property type="entry name" value="L-GLUTAMINE--4-(METHYLSULFANYL)-2-OXOBUTANOATE AMINOTRANSFERASE"/>
    <property type="match status" value="1"/>
</dbReference>
<dbReference type="Pfam" id="PF00155">
    <property type="entry name" value="Aminotran_1_2"/>
    <property type="match status" value="1"/>
</dbReference>
<dbReference type="SUPFAM" id="SSF53383">
    <property type="entry name" value="PLP-dependent transferases"/>
    <property type="match status" value="1"/>
</dbReference>
<dbReference type="PROSITE" id="PS00105">
    <property type="entry name" value="AA_TRANSFER_CLASS_1"/>
    <property type="match status" value="1"/>
</dbReference>
<sequence length="386" mass="43000">MQSAHRLNNLPPYLFADLDKMVQKEQAKGKEIIKLGIGDPGMKPPEGIIKAATQEMYKGENHGYPAYDGIDKLKHAIKEYYQSRFGVELNPDREILTLIGSKEGIANISQAILNPGDINFIPDPSYPVYKNGTILAGGTPHSMPLKQDNGFIPELESIPQSRLSKGKIVFMNYPNNPTSAVASKDFYSHAVKFCQKNKLLLCNDAAYSEIAFDDYQPQSLLSVPGAKEVAIEFNSLSKTFNMTGWRVGFVVGNEKAISALAKYKTNVDSGVFTPLQLAATHALENRHEYIPDILKAYKERRDLVIEFLEEAGFHVYHPKATFYVWAQVPGNQDSFNFTKSLLTKTGVVVTPGIGFGKHGEGYFRIALTVTKDRLKTAMEKICEYFS</sequence>
<reference key="1">
    <citation type="submission" date="2008-04" db="EMBL/GenBank/DDBJ databases">
        <title>Complete sequence of chromosome of Natranaerobius thermophilus JW/NM-WN-LF.</title>
        <authorList>
            <consortium name="US DOE Joint Genome Institute"/>
            <person name="Copeland A."/>
            <person name="Lucas S."/>
            <person name="Lapidus A."/>
            <person name="Glavina del Rio T."/>
            <person name="Dalin E."/>
            <person name="Tice H."/>
            <person name="Bruce D."/>
            <person name="Goodwin L."/>
            <person name="Pitluck S."/>
            <person name="Chertkov O."/>
            <person name="Brettin T."/>
            <person name="Detter J.C."/>
            <person name="Han C."/>
            <person name="Kuske C.R."/>
            <person name="Schmutz J."/>
            <person name="Larimer F."/>
            <person name="Land M."/>
            <person name="Hauser L."/>
            <person name="Kyrpides N."/>
            <person name="Lykidis A."/>
            <person name="Mesbah N.M."/>
            <person name="Wiegel J."/>
        </authorList>
    </citation>
    <scope>NUCLEOTIDE SEQUENCE [LARGE SCALE GENOMIC DNA]</scope>
    <source>
        <strain>ATCC BAA-1301 / DSM 18059 / JW/NM-WN-LF</strain>
    </source>
</reference>
<evidence type="ECO:0000255" key="1">
    <source>
        <dbReference type="HAMAP-Rule" id="MF_01642"/>
    </source>
</evidence>